<reference key="1">
    <citation type="journal article" date="2003" name="Nat. Biotechnol.">
        <title>The genome sequence of the entomopathogenic bacterium Photorhabdus luminescens.</title>
        <authorList>
            <person name="Duchaud E."/>
            <person name="Rusniok C."/>
            <person name="Frangeul L."/>
            <person name="Buchrieser C."/>
            <person name="Givaudan A."/>
            <person name="Taourit S."/>
            <person name="Bocs S."/>
            <person name="Boursaux-Eude C."/>
            <person name="Chandler M."/>
            <person name="Charles J.-F."/>
            <person name="Dassa E."/>
            <person name="Derose R."/>
            <person name="Derzelle S."/>
            <person name="Freyssinet G."/>
            <person name="Gaudriault S."/>
            <person name="Medigue C."/>
            <person name="Lanois A."/>
            <person name="Powell K."/>
            <person name="Siguier P."/>
            <person name="Vincent R."/>
            <person name="Wingate V."/>
            <person name="Zouine M."/>
            <person name="Glaser P."/>
            <person name="Boemare N."/>
            <person name="Danchin A."/>
            <person name="Kunst F."/>
        </authorList>
    </citation>
    <scope>NUCLEOTIDE SEQUENCE [LARGE SCALE GENOMIC DNA]</scope>
    <source>
        <strain>DSM 15139 / CIP 105565 / TT01</strain>
    </source>
</reference>
<comment type="function">
    <text evidence="1">Involved in the regulation of glutamine synthetase GlnA, a key enzyme in the process to assimilate ammonia. When cellular nitrogen levels are high, the C-terminal adenylyl transferase (AT) inactivates GlnA by covalent transfer of an adenylyl group from ATP to specific tyrosine residue of GlnA, thus reducing its activity. Conversely, when nitrogen levels are low, the N-terminal adenylyl removase (AR) activates GlnA by removing the adenylyl group by phosphorolysis, increasing its activity. The regulatory region of GlnE binds the signal transduction protein PII (GlnB) which indicates the nitrogen status of the cell.</text>
</comment>
<comment type="catalytic activity">
    <reaction evidence="1">
        <text>[glutamine synthetase]-O(4)-(5'-adenylyl)-L-tyrosine + phosphate = [glutamine synthetase]-L-tyrosine + ADP</text>
        <dbReference type="Rhea" id="RHEA:43716"/>
        <dbReference type="Rhea" id="RHEA-COMP:10660"/>
        <dbReference type="Rhea" id="RHEA-COMP:10661"/>
        <dbReference type="ChEBI" id="CHEBI:43474"/>
        <dbReference type="ChEBI" id="CHEBI:46858"/>
        <dbReference type="ChEBI" id="CHEBI:83624"/>
        <dbReference type="ChEBI" id="CHEBI:456216"/>
        <dbReference type="EC" id="2.7.7.89"/>
    </reaction>
</comment>
<comment type="catalytic activity">
    <reaction evidence="1">
        <text>[glutamine synthetase]-L-tyrosine + ATP = [glutamine synthetase]-O(4)-(5'-adenylyl)-L-tyrosine + diphosphate</text>
        <dbReference type="Rhea" id="RHEA:18589"/>
        <dbReference type="Rhea" id="RHEA-COMP:10660"/>
        <dbReference type="Rhea" id="RHEA-COMP:10661"/>
        <dbReference type="ChEBI" id="CHEBI:30616"/>
        <dbReference type="ChEBI" id="CHEBI:33019"/>
        <dbReference type="ChEBI" id="CHEBI:46858"/>
        <dbReference type="ChEBI" id="CHEBI:83624"/>
        <dbReference type="EC" id="2.7.7.42"/>
    </reaction>
</comment>
<comment type="cofactor">
    <cofactor evidence="1">
        <name>Mg(2+)</name>
        <dbReference type="ChEBI" id="CHEBI:18420"/>
    </cofactor>
</comment>
<comment type="similarity">
    <text evidence="1">Belongs to the GlnE family.</text>
</comment>
<feature type="chain" id="PRO_0000209264" description="Bifunctional glutamine synthetase adenylyltransferase/adenylyl-removing enzyme">
    <location>
        <begin position="1"/>
        <end position="956"/>
    </location>
</feature>
<feature type="region of interest" description="Adenylyl removase" evidence="1">
    <location>
        <begin position="1"/>
        <end position="441"/>
    </location>
</feature>
<feature type="region of interest" description="Adenylyl transferase" evidence="1">
    <location>
        <begin position="450"/>
        <end position="956"/>
    </location>
</feature>
<organism>
    <name type="scientific">Photorhabdus laumondii subsp. laumondii (strain DSM 15139 / CIP 105565 / TT01)</name>
    <name type="common">Photorhabdus luminescens subsp. laumondii</name>
    <dbReference type="NCBI Taxonomy" id="243265"/>
    <lineage>
        <taxon>Bacteria</taxon>
        <taxon>Pseudomonadati</taxon>
        <taxon>Pseudomonadota</taxon>
        <taxon>Gammaproteobacteria</taxon>
        <taxon>Enterobacterales</taxon>
        <taxon>Morganellaceae</taxon>
        <taxon>Photorhabdus</taxon>
    </lineage>
</organism>
<dbReference type="EC" id="2.7.7.89" evidence="1"/>
<dbReference type="EC" id="2.7.7.42" evidence="1"/>
<dbReference type="EMBL" id="BX571872">
    <property type="protein sequence ID" value="CAE16341.1"/>
    <property type="molecule type" value="Genomic_DNA"/>
</dbReference>
<dbReference type="RefSeq" id="WP_011148102.1">
    <property type="nucleotide sequence ID" value="NC_005126.1"/>
</dbReference>
<dbReference type="SMR" id="Q7N0C2"/>
<dbReference type="STRING" id="243265.plu3969"/>
<dbReference type="GeneID" id="48850195"/>
<dbReference type="KEGG" id="plu:plu3969"/>
<dbReference type="eggNOG" id="COG1391">
    <property type="taxonomic scope" value="Bacteria"/>
</dbReference>
<dbReference type="HOGENOM" id="CLU_006233_0_1_6"/>
<dbReference type="OrthoDB" id="9759366at2"/>
<dbReference type="Proteomes" id="UP000002514">
    <property type="component" value="Chromosome"/>
</dbReference>
<dbReference type="GO" id="GO:0005829">
    <property type="term" value="C:cytosol"/>
    <property type="evidence" value="ECO:0007669"/>
    <property type="project" value="TreeGrafter"/>
</dbReference>
<dbReference type="GO" id="GO:0008882">
    <property type="term" value="F:[glutamate-ammonia-ligase] adenylyltransferase activity"/>
    <property type="evidence" value="ECO:0007669"/>
    <property type="project" value="UniProtKB-UniRule"/>
</dbReference>
<dbReference type="GO" id="GO:0047388">
    <property type="term" value="F:[glutamine synthetase]-adenylyl-L-tyrosine phosphorylase activity"/>
    <property type="evidence" value="ECO:0007669"/>
    <property type="project" value="UniProtKB-EC"/>
</dbReference>
<dbReference type="GO" id="GO:0005524">
    <property type="term" value="F:ATP binding"/>
    <property type="evidence" value="ECO:0007669"/>
    <property type="project" value="UniProtKB-UniRule"/>
</dbReference>
<dbReference type="GO" id="GO:0000287">
    <property type="term" value="F:magnesium ion binding"/>
    <property type="evidence" value="ECO:0007669"/>
    <property type="project" value="UniProtKB-UniRule"/>
</dbReference>
<dbReference type="GO" id="GO:0000820">
    <property type="term" value="P:regulation of glutamine family amino acid metabolic process"/>
    <property type="evidence" value="ECO:0007669"/>
    <property type="project" value="UniProtKB-UniRule"/>
</dbReference>
<dbReference type="CDD" id="cd05401">
    <property type="entry name" value="NT_GlnE_GlnD_like"/>
    <property type="match status" value="2"/>
</dbReference>
<dbReference type="FunFam" id="1.20.120.1510:FF:000001">
    <property type="entry name" value="Bifunctional glutamine synthetase adenylyltransferase/adenylyl-removing enzyme"/>
    <property type="match status" value="1"/>
</dbReference>
<dbReference type="FunFam" id="1.20.120.330:FF:000005">
    <property type="entry name" value="Bifunctional glutamine synthetase adenylyltransferase/adenylyl-removing enzyme"/>
    <property type="match status" value="1"/>
</dbReference>
<dbReference type="FunFam" id="1.20.120.330:FF:000008">
    <property type="entry name" value="Bifunctional glutamine synthetase adenylyltransferase/adenylyl-removing enzyme"/>
    <property type="match status" value="1"/>
</dbReference>
<dbReference type="FunFam" id="3.30.460.10:FF:000009">
    <property type="entry name" value="Bifunctional glutamine synthetase adenylyltransferase/adenylyl-removing enzyme"/>
    <property type="match status" value="1"/>
</dbReference>
<dbReference type="FunFam" id="3.30.460.10:FF:000014">
    <property type="entry name" value="Bifunctional glutamine synthetase adenylyltransferase/adenylyl-removing enzyme"/>
    <property type="match status" value="1"/>
</dbReference>
<dbReference type="Gene3D" id="1.20.120.1510">
    <property type="match status" value="1"/>
</dbReference>
<dbReference type="Gene3D" id="3.30.460.10">
    <property type="entry name" value="Beta Polymerase, domain 2"/>
    <property type="match status" value="2"/>
</dbReference>
<dbReference type="Gene3D" id="1.10.4050.10">
    <property type="entry name" value="Glutamine synthase adenylyltransferase GlnE"/>
    <property type="match status" value="1"/>
</dbReference>
<dbReference type="Gene3D" id="1.20.120.330">
    <property type="entry name" value="Nucleotidyltransferases domain 2"/>
    <property type="match status" value="2"/>
</dbReference>
<dbReference type="HAMAP" id="MF_00802">
    <property type="entry name" value="GlnE"/>
    <property type="match status" value="1"/>
</dbReference>
<dbReference type="InterPro" id="IPR023057">
    <property type="entry name" value="GlnE"/>
</dbReference>
<dbReference type="InterPro" id="IPR005190">
    <property type="entry name" value="GlnE_rpt_dom"/>
</dbReference>
<dbReference type="InterPro" id="IPR043519">
    <property type="entry name" value="NT_sf"/>
</dbReference>
<dbReference type="InterPro" id="IPR013546">
    <property type="entry name" value="PII_UdlTrfase/GS_AdlTrfase"/>
</dbReference>
<dbReference type="NCBIfam" id="NF008292">
    <property type="entry name" value="PRK11072.1"/>
    <property type="match status" value="1"/>
</dbReference>
<dbReference type="PANTHER" id="PTHR30621:SF0">
    <property type="entry name" value="BIFUNCTIONAL GLUTAMINE SYNTHETASE ADENYLYLTRANSFERASE_ADENYLYL-REMOVING ENZYME"/>
    <property type="match status" value="1"/>
</dbReference>
<dbReference type="PANTHER" id="PTHR30621">
    <property type="entry name" value="GLUTAMINE SYNTHETASE ADENYLYLTRANSFERASE"/>
    <property type="match status" value="1"/>
</dbReference>
<dbReference type="Pfam" id="PF08335">
    <property type="entry name" value="GlnD_UR_UTase"/>
    <property type="match status" value="2"/>
</dbReference>
<dbReference type="Pfam" id="PF03710">
    <property type="entry name" value="GlnE"/>
    <property type="match status" value="2"/>
</dbReference>
<dbReference type="SUPFAM" id="SSF81301">
    <property type="entry name" value="Nucleotidyltransferase"/>
    <property type="match status" value="2"/>
</dbReference>
<dbReference type="SUPFAM" id="SSF81593">
    <property type="entry name" value="Nucleotidyltransferase substrate binding subunit/domain"/>
    <property type="match status" value="2"/>
</dbReference>
<protein>
    <recommendedName>
        <fullName evidence="1">Bifunctional glutamine synthetase adenylyltransferase/adenylyl-removing enzyme</fullName>
    </recommendedName>
    <alternativeName>
        <fullName evidence="1">ATP:glutamine synthetase adenylyltransferase</fullName>
    </alternativeName>
    <alternativeName>
        <fullName evidence="1">ATase</fullName>
    </alternativeName>
    <domain>
        <recommendedName>
            <fullName evidence="1">Glutamine synthetase adenylyl-L-tyrosine phosphorylase</fullName>
            <ecNumber evidence="1">2.7.7.89</ecNumber>
        </recommendedName>
        <alternativeName>
            <fullName evidence="1">Adenylyl removase</fullName>
            <shortName evidence="1">AR</shortName>
            <shortName evidence="1">AT-N</shortName>
        </alternativeName>
    </domain>
    <domain>
        <recommendedName>
            <fullName evidence="1">Glutamine synthetase adenylyl transferase</fullName>
            <ecNumber evidence="1">2.7.7.42</ecNumber>
        </recommendedName>
        <alternativeName>
            <fullName evidence="1">Adenylyl transferase</fullName>
            <shortName evidence="1">AT</shortName>
            <shortName evidence="1">AT-C</shortName>
        </alternativeName>
    </domain>
</protein>
<evidence type="ECO:0000255" key="1">
    <source>
        <dbReference type="HAMAP-Rule" id="MF_00802"/>
    </source>
</evidence>
<accession>Q7N0C2</accession>
<proteinExistence type="inferred from homology"/>
<name>GLNE_PHOLL</name>
<keyword id="KW-0067">ATP-binding</keyword>
<keyword id="KW-0460">Magnesium</keyword>
<keyword id="KW-0511">Multifunctional enzyme</keyword>
<keyword id="KW-0547">Nucleotide-binding</keyword>
<keyword id="KW-0548">Nucleotidyltransferase</keyword>
<keyword id="KW-1185">Reference proteome</keyword>
<keyword id="KW-0808">Transferase</keyword>
<sequence length="956" mass="110384">MLPLSTPLLAQLQRVTEHFHQLTLNVEPVAAHEQAILSLSDFVVENLQAHPEWLVEIRQHPPEAQEWHQYTEWLQQLLASVEDENTLMRVLRQFRNKILVRIAWSQALHSITTQETLQQLSMLAETLIIAARDWLYQRCCQDWGTPCNERGEPQPLLIIGMGKLGGGELNFSSDIDLIFVYPENGITQGGRREMDNTQFFTRLGQHLIKVLDQQTVDGFVYRVDMRLRPFGDSGPLVFSFVALEDYYQEQGRDWERYAMVKARIMGSDNQAYGEELRRMLRPFIFRRYIDFSVIQSLRNMKGMIEREVRHRGLKDNIKLGAGGIREIEFIAQVFQLIRGGRELCLQSQALLPTLQIIAKLTLLQSLQVKQLADGYLFLRRLENLLQSINDQQTQTLPEDELNRSRLTWGMGFESWDALIIELNNKMSAVRAIFTQLIGDDSDNSDEEPSHVPFKSLWLEDLEKEELIILAPHLDEEIAQQILHIISVFRHDVGKRTIGPRGRDVLDHLMPRLLAKVCLRQDANNQDVNNRNVNIVLERVIPLLLSIVSRTTYLELILESEAVLAHVIRLCAASPMIATQLACHPLLLDELLDPQFLYEPLPLNAYKDELRQYLLRIPEDDEEQQLEALRQFKQAQLLRIAAEDITGVLPVMKVSDHLTYLAEAIIEAVVLQAWGQMAKRYGVPSHLSQRQGLGFAVIGYGKLGGWELGYGSDLDLVFLLDCPMDVMTDGDRSIDARQFYLRLAQRIMHLFSARTSSGVLYDVDVRLRPSGESGMLVSTIGAFADYQRNQAWTWEHQALVRARMVFGDENLHRDFERIRHQTLCTRREPALLRQQVREMREKMHKHLGSHHSDQFDIKADPGGITDIEFIAQYLVLRYAAENERLVRWSDNVRIFQLMAAYEIMDEDEAAGLTQAYVSMRDELHHLTLQTHSSRVSIHCFSEQQERVRRSWQQWLGE</sequence>
<gene>
    <name evidence="1" type="primary">glnE</name>
    <name type="ordered locus">plu3969</name>
</gene>